<comment type="function">
    <text evidence="2">This enzyme is involved in nucleotide metabolism: it produces dUMP, the immediate precursor of thymidine nucleotides and it decreases the intracellular concentration of dUTP so that uracil cannot be incorporated into DNA.</text>
</comment>
<comment type="catalytic activity">
    <reaction evidence="2">
        <text>dUTP + H2O = dUMP + diphosphate + H(+)</text>
        <dbReference type="Rhea" id="RHEA:10248"/>
        <dbReference type="ChEBI" id="CHEBI:15377"/>
        <dbReference type="ChEBI" id="CHEBI:15378"/>
        <dbReference type="ChEBI" id="CHEBI:33019"/>
        <dbReference type="ChEBI" id="CHEBI:61555"/>
        <dbReference type="ChEBI" id="CHEBI:246422"/>
        <dbReference type="EC" id="3.6.1.23"/>
    </reaction>
</comment>
<comment type="cofactor">
    <cofactor evidence="2">
        <name>Mg(2+)</name>
        <dbReference type="ChEBI" id="CHEBI:18420"/>
    </cofactor>
</comment>
<comment type="pathway">
    <text evidence="2">Pyrimidine metabolism; dUMP biosynthesis; dUMP from dCTP (dUTP route): step 2/2.</text>
</comment>
<comment type="subunit">
    <text evidence="2">Homotrimer.</text>
</comment>
<comment type="miscellaneous">
    <text evidence="1">Each trimer binds three substrate molecules. The ligands are bound between subunits, and for each substrate molecule, residues from adjacent subunits contribute to the binding interactions (By similarity).</text>
</comment>
<comment type="similarity">
    <text evidence="2">Belongs to the dUTPase family.</text>
</comment>
<keyword id="KW-0378">Hydrolase</keyword>
<keyword id="KW-0460">Magnesium</keyword>
<keyword id="KW-0479">Metal-binding</keyword>
<keyword id="KW-0546">Nucleotide metabolism</keyword>
<keyword id="KW-1185">Reference proteome</keyword>
<name>DUT_MYCPA</name>
<gene>
    <name evidence="2" type="primary">dut</name>
    <name type="ordered locus">MAP_2814c</name>
</gene>
<evidence type="ECO:0000250" key="1"/>
<evidence type="ECO:0000255" key="2">
    <source>
        <dbReference type="HAMAP-Rule" id="MF_00116"/>
    </source>
</evidence>
<organism>
    <name type="scientific">Mycolicibacterium paratuberculosis (strain ATCC BAA-968 / K-10)</name>
    <name type="common">Mycobacterium paratuberculosis</name>
    <dbReference type="NCBI Taxonomy" id="262316"/>
    <lineage>
        <taxon>Bacteria</taxon>
        <taxon>Bacillati</taxon>
        <taxon>Actinomycetota</taxon>
        <taxon>Actinomycetes</taxon>
        <taxon>Mycobacteriales</taxon>
        <taxon>Mycobacteriaceae</taxon>
        <taxon>Mycobacterium</taxon>
        <taxon>Mycobacterium avium complex (MAC)</taxon>
    </lineage>
</organism>
<protein>
    <recommendedName>
        <fullName evidence="2">Deoxyuridine 5'-triphosphate nucleotidohydrolase</fullName>
        <shortName evidence="2">dUTPase</shortName>
        <ecNumber evidence="2">3.6.1.23</ecNumber>
    </recommendedName>
    <alternativeName>
        <fullName evidence="2">dUTP pyrophosphatase</fullName>
    </alternativeName>
</protein>
<sequence length="154" mass="15900">MSTSLAIVRLDPGLPLPSRAHEGDAGVDLYSAEDVRLEPGRRALVRTGVAVAIPFGMVGLVHPRSGLAARVGLSIVNSPGTIDAGYRGEIKVALINLDPAEPIVVHRGDRIAQLLVQRVELVELVEVSSFDEAGLAGTSRGDGGHGSSGGHASL</sequence>
<proteinExistence type="inferred from homology"/>
<reference key="1">
    <citation type="journal article" date="2005" name="Proc. Natl. Acad. Sci. U.S.A.">
        <title>The complete genome sequence of Mycobacterium avium subspecies paratuberculosis.</title>
        <authorList>
            <person name="Li L."/>
            <person name="Bannantine J.P."/>
            <person name="Zhang Q."/>
            <person name="Amonsin A."/>
            <person name="May B.J."/>
            <person name="Alt D."/>
            <person name="Banerji N."/>
            <person name="Kanjilal S."/>
            <person name="Kapur V."/>
        </authorList>
    </citation>
    <scope>NUCLEOTIDE SEQUENCE [LARGE SCALE GENOMIC DNA]</scope>
    <source>
        <strain>ATCC BAA-968 / K-10</strain>
    </source>
</reference>
<feature type="chain" id="PRO_0000182883" description="Deoxyuridine 5'-triphosphate nucleotidohydrolase">
    <location>
        <begin position="1"/>
        <end position="154"/>
    </location>
</feature>
<feature type="binding site" evidence="2">
    <location>
        <begin position="64"/>
        <end position="66"/>
    </location>
    <ligand>
        <name>substrate</name>
    </ligand>
</feature>
<feature type="binding site" evidence="2">
    <location>
        <position position="77"/>
    </location>
    <ligand>
        <name>substrate</name>
    </ligand>
</feature>
<feature type="binding site" evidence="2">
    <location>
        <begin position="81"/>
        <end position="83"/>
    </location>
    <ligand>
        <name>substrate</name>
    </ligand>
</feature>
<feature type="binding site" evidence="2">
    <location>
        <position position="91"/>
    </location>
    <ligand>
        <name>substrate</name>
    </ligand>
</feature>
<accession>P61910</accession>
<dbReference type="EC" id="3.6.1.23" evidence="2"/>
<dbReference type="EMBL" id="AE016958">
    <property type="protein sequence ID" value="AAS05131.1"/>
    <property type="molecule type" value="Genomic_DNA"/>
</dbReference>
<dbReference type="RefSeq" id="WP_003875248.1">
    <property type="nucleotide sequence ID" value="NZ_CP106873.1"/>
</dbReference>
<dbReference type="SMR" id="P61910"/>
<dbReference type="STRING" id="262316.MAP_2814c"/>
<dbReference type="GeneID" id="75270977"/>
<dbReference type="KEGG" id="mpa:MAP_2814c"/>
<dbReference type="eggNOG" id="COG0756">
    <property type="taxonomic scope" value="Bacteria"/>
</dbReference>
<dbReference type="HOGENOM" id="CLU_068508_1_3_11"/>
<dbReference type="UniPathway" id="UPA00610">
    <property type="reaction ID" value="UER00666"/>
</dbReference>
<dbReference type="Proteomes" id="UP000000580">
    <property type="component" value="Chromosome"/>
</dbReference>
<dbReference type="GO" id="GO:0004170">
    <property type="term" value="F:dUTP diphosphatase activity"/>
    <property type="evidence" value="ECO:0007669"/>
    <property type="project" value="UniProtKB-UniRule"/>
</dbReference>
<dbReference type="GO" id="GO:0000287">
    <property type="term" value="F:magnesium ion binding"/>
    <property type="evidence" value="ECO:0007669"/>
    <property type="project" value="UniProtKB-UniRule"/>
</dbReference>
<dbReference type="GO" id="GO:0006226">
    <property type="term" value="P:dUMP biosynthetic process"/>
    <property type="evidence" value="ECO:0007669"/>
    <property type="project" value="UniProtKB-UniRule"/>
</dbReference>
<dbReference type="GO" id="GO:0046081">
    <property type="term" value="P:dUTP catabolic process"/>
    <property type="evidence" value="ECO:0007669"/>
    <property type="project" value="InterPro"/>
</dbReference>
<dbReference type="CDD" id="cd07557">
    <property type="entry name" value="trimeric_dUTPase"/>
    <property type="match status" value="1"/>
</dbReference>
<dbReference type="FunFam" id="2.70.40.10:FF:000008">
    <property type="entry name" value="Deoxyuridine 5'-triphosphate nucleotidohydrolase"/>
    <property type="match status" value="1"/>
</dbReference>
<dbReference type="Gene3D" id="2.70.40.10">
    <property type="match status" value="1"/>
</dbReference>
<dbReference type="HAMAP" id="MF_00116">
    <property type="entry name" value="dUTPase_bact"/>
    <property type="match status" value="1"/>
</dbReference>
<dbReference type="InterPro" id="IPR008181">
    <property type="entry name" value="dUTPase"/>
</dbReference>
<dbReference type="InterPro" id="IPR029054">
    <property type="entry name" value="dUTPase-like"/>
</dbReference>
<dbReference type="InterPro" id="IPR036157">
    <property type="entry name" value="dUTPase-like_sf"/>
</dbReference>
<dbReference type="InterPro" id="IPR033704">
    <property type="entry name" value="dUTPase_trimeric"/>
</dbReference>
<dbReference type="NCBIfam" id="TIGR00576">
    <property type="entry name" value="dut"/>
    <property type="match status" value="1"/>
</dbReference>
<dbReference type="NCBIfam" id="NF001862">
    <property type="entry name" value="PRK00601.1"/>
    <property type="match status" value="1"/>
</dbReference>
<dbReference type="PANTHER" id="PTHR11241">
    <property type="entry name" value="DEOXYURIDINE 5'-TRIPHOSPHATE NUCLEOTIDOHYDROLASE"/>
    <property type="match status" value="1"/>
</dbReference>
<dbReference type="PANTHER" id="PTHR11241:SF0">
    <property type="entry name" value="DEOXYURIDINE 5'-TRIPHOSPHATE NUCLEOTIDOHYDROLASE"/>
    <property type="match status" value="1"/>
</dbReference>
<dbReference type="Pfam" id="PF00692">
    <property type="entry name" value="dUTPase"/>
    <property type="match status" value="1"/>
</dbReference>
<dbReference type="SUPFAM" id="SSF51283">
    <property type="entry name" value="dUTPase-like"/>
    <property type="match status" value="1"/>
</dbReference>